<keyword id="KW-0963">Cytoplasm</keyword>
<keyword id="KW-0690">Ribosome biogenesis</keyword>
<keyword id="KW-0694">RNA-binding</keyword>
<keyword id="KW-0699">rRNA-binding</keyword>
<proteinExistence type="inferred from homology"/>
<comment type="function">
    <text evidence="1">Member of a network of 50S ribosomal subunit biogenesis factors which assembles along the 30S-50S interface, preventing incorrect 23S rRNA structures from forming. Promotes peptidyl transferase center (PTC) maturation.</text>
</comment>
<comment type="subcellular location">
    <subcellularLocation>
        <location evidence="1">Cytoplasm</location>
    </subcellularLocation>
    <text evidence="1">Associates with late stage pre-50S ribosomal subunits.</text>
</comment>
<comment type="similarity">
    <text evidence="1">Belongs to the DarP family.</text>
</comment>
<protein>
    <recommendedName>
        <fullName evidence="1">Dual-action ribosomal maturation protein DarP</fullName>
    </recommendedName>
    <alternativeName>
        <fullName evidence="1">Large ribosomal subunit assembly factor DarP</fullName>
    </alternativeName>
</protein>
<reference key="1">
    <citation type="journal article" date="2001" name="Nature">
        <title>Complete genome sequence of a multiple drug resistant Salmonella enterica serovar Typhi CT18.</title>
        <authorList>
            <person name="Parkhill J."/>
            <person name="Dougan G."/>
            <person name="James K.D."/>
            <person name="Thomson N.R."/>
            <person name="Pickard D."/>
            <person name="Wain J."/>
            <person name="Churcher C.M."/>
            <person name="Mungall K.L."/>
            <person name="Bentley S.D."/>
            <person name="Holden M.T.G."/>
            <person name="Sebaihia M."/>
            <person name="Baker S."/>
            <person name="Basham D."/>
            <person name="Brooks K."/>
            <person name="Chillingworth T."/>
            <person name="Connerton P."/>
            <person name="Cronin A."/>
            <person name="Davis P."/>
            <person name="Davies R.M."/>
            <person name="Dowd L."/>
            <person name="White N."/>
            <person name="Farrar J."/>
            <person name="Feltwell T."/>
            <person name="Hamlin N."/>
            <person name="Haque A."/>
            <person name="Hien T.T."/>
            <person name="Holroyd S."/>
            <person name="Jagels K."/>
            <person name="Krogh A."/>
            <person name="Larsen T.S."/>
            <person name="Leather S."/>
            <person name="Moule S."/>
            <person name="O'Gaora P."/>
            <person name="Parry C."/>
            <person name="Quail M.A."/>
            <person name="Rutherford K.M."/>
            <person name="Simmonds M."/>
            <person name="Skelton J."/>
            <person name="Stevens K."/>
            <person name="Whitehead S."/>
            <person name="Barrell B.G."/>
        </authorList>
    </citation>
    <scope>NUCLEOTIDE SEQUENCE [LARGE SCALE GENOMIC DNA]</scope>
    <source>
        <strain>CT18</strain>
    </source>
</reference>
<reference key="2">
    <citation type="journal article" date="2003" name="J. Bacteriol.">
        <title>Comparative genomics of Salmonella enterica serovar Typhi strains Ty2 and CT18.</title>
        <authorList>
            <person name="Deng W."/>
            <person name="Liou S.-R."/>
            <person name="Plunkett G. III"/>
            <person name="Mayhew G.F."/>
            <person name="Rose D.J."/>
            <person name="Burland V."/>
            <person name="Kodoyianni V."/>
            <person name="Schwartz D.C."/>
            <person name="Blattner F.R."/>
        </authorList>
    </citation>
    <scope>NUCLEOTIDE SEQUENCE [LARGE SCALE GENOMIC DNA]</scope>
    <source>
        <strain>ATCC 700931 / Ty2</strain>
    </source>
</reference>
<name>DARP_SALTI</name>
<organism>
    <name type="scientific">Salmonella typhi</name>
    <dbReference type="NCBI Taxonomy" id="90370"/>
    <lineage>
        <taxon>Bacteria</taxon>
        <taxon>Pseudomonadati</taxon>
        <taxon>Pseudomonadota</taxon>
        <taxon>Gammaproteobacteria</taxon>
        <taxon>Enterobacterales</taxon>
        <taxon>Enterobacteriaceae</taxon>
        <taxon>Salmonella</taxon>
    </lineage>
</organism>
<evidence type="ECO:0000255" key="1">
    <source>
        <dbReference type="HAMAP-Rule" id="MF_00765"/>
    </source>
</evidence>
<dbReference type="EMBL" id="AL513382">
    <property type="protein sequence ID" value="CAD06897.1"/>
    <property type="molecule type" value="Genomic_DNA"/>
</dbReference>
<dbReference type="EMBL" id="AE014613">
    <property type="protein sequence ID" value="AAO71918.1"/>
    <property type="molecule type" value="Genomic_DNA"/>
</dbReference>
<dbReference type="RefSeq" id="NP_458854.1">
    <property type="nucleotide sequence ID" value="NC_003198.1"/>
</dbReference>
<dbReference type="SMR" id="P60828"/>
<dbReference type="STRING" id="220341.gene:17588597"/>
<dbReference type="KEGG" id="stt:t4471"/>
<dbReference type="KEGG" id="sty:STY4776"/>
<dbReference type="PATRIC" id="fig|220341.7.peg.4880"/>
<dbReference type="eggNOG" id="COG3028">
    <property type="taxonomic scope" value="Bacteria"/>
</dbReference>
<dbReference type="HOGENOM" id="CLU_106757_2_0_6"/>
<dbReference type="OMA" id="NLWPNAD"/>
<dbReference type="OrthoDB" id="5293604at2"/>
<dbReference type="Proteomes" id="UP000000541">
    <property type="component" value="Chromosome"/>
</dbReference>
<dbReference type="Proteomes" id="UP000002670">
    <property type="component" value="Chromosome"/>
</dbReference>
<dbReference type="GO" id="GO:0005829">
    <property type="term" value="C:cytosol"/>
    <property type="evidence" value="ECO:0007669"/>
    <property type="project" value="TreeGrafter"/>
</dbReference>
<dbReference type="GO" id="GO:0043022">
    <property type="term" value="F:ribosome binding"/>
    <property type="evidence" value="ECO:0007669"/>
    <property type="project" value="UniProtKB-UniRule"/>
</dbReference>
<dbReference type="GO" id="GO:0019843">
    <property type="term" value="F:rRNA binding"/>
    <property type="evidence" value="ECO:0007669"/>
    <property type="project" value="UniProtKB-UniRule"/>
</dbReference>
<dbReference type="GO" id="GO:1902626">
    <property type="term" value="P:assembly of large subunit precursor of preribosome"/>
    <property type="evidence" value="ECO:0007669"/>
    <property type="project" value="UniProtKB-UniRule"/>
</dbReference>
<dbReference type="CDD" id="cd16331">
    <property type="entry name" value="YjgA-like"/>
    <property type="match status" value="1"/>
</dbReference>
<dbReference type="FunFam" id="1.10.60.30:FF:000001">
    <property type="entry name" value="UPF0307 protein YjgA"/>
    <property type="match status" value="1"/>
</dbReference>
<dbReference type="FunFam" id="1.10.60.30:FF:000002">
    <property type="entry name" value="UPF0307 protein YjgA"/>
    <property type="match status" value="1"/>
</dbReference>
<dbReference type="Gene3D" id="1.10.60.30">
    <property type="entry name" value="PSPTO4464-like domains"/>
    <property type="match status" value="2"/>
</dbReference>
<dbReference type="HAMAP" id="MF_00765">
    <property type="entry name" value="DarP"/>
    <property type="match status" value="1"/>
</dbReference>
<dbReference type="InterPro" id="IPR006839">
    <property type="entry name" value="DarP"/>
</dbReference>
<dbReference type="InterPro" id="IPR023153">
    <property type="entry name" value="DarP_sf"/>
</dbReference>
<dbReference type="NCBIfam" id="NF003593">
    <property type="entry name" value="PRK05255.1-1"/>
    <property type="match status" value="1"/>
</dbReference>
<dbReference type="PANTHER" id="PTHR38101">
    <property type="entry name" value="UPF0307 PROTEIN YJGA"/>
    <property type="match status" value="1"/>
</dbReference>
<dbReference type="PANTHER" id="PTHR38101:SF1">
    <property type="entry name" value="UPF0307 PROTEIN YJGA"/>
    <property type="match status" value="1"/>
</dbReference>
<dbReference type="Pfam" id="PF04751">
    <property type="entry name" value="DarP"/>
    <property type="match status" value="1"/>
</dbReference>
<dbReference type="PIRSF" id="PIRSF016183">
    <property type="entry name" value="UCP016183"/>
    <property type="match status" value="1"/>
</dbReference>
<dbReference type="SUPFAM" id="SSF158710">
    <property type="entry name" value="PSPTO4464-like"/>
    <property type="match status" value="1"/>
</dbReference>
<feature type="chain" id="PRO_0000208227" description="Dual-action ribosomal maturation protein DarP">
    <location>
        <begin position="1"/>
        <end position="183"/>
    </location>
</feature>
<sequence length="183" mass="21392">MTKQPEDWLDDVPGDDIEDEDDEIIWVSKSEIKRDAEELKRLGAELVDLGKNALDKIPLDADLRDAIELAQRIKMEGRRRQLQLIGKMLRQRDVEPIRQALDKLKNRHNQQVVLFHKLEHLRDRLIVEGDDAVAEVLTLWPHADRQQLRSLIRNAKKEKEGNKPPKSARQIFQYLRELAENEG</sequence>
<gene>
    <name evidence="1" type="primary">darP</name>
    <name type="ordered locus">STY4776</name>
    <name type="ordered locus">t4471</name>
</gene>
<accession>P60828</accession>
<accession>Q8XEZ5</accession>